<gene>
    <name evidence="9 14" type="primary">Tssk6</name>
    <name evidence="12 14" type="synonym">Sstk</name>
</gene>
<comment type="function">
    <text evidence="5 7 8">Serine/threonine-protein kinase component of the sperm flagellar doublet microtubules (PubMed:15870294, PubMed:37295417). May act as a regulator of sperm motility by mediating phosphorylation of sperm doublet microtubule proteins (PubMed:37295417). Plays a role in DNA condensation during postmeiotic chromatin remodeling and histone-to-protamine transition during spermatogenesis (PubMed:15870294, PubMed:28389581).</text>
</comment>
<comment type="catalytic activity">
    <reaction evidence="5 6">
        <text>L-seryl-[protein] + ATP = O-phospho-L-seryl-[protein] + ADP + H(+)</text>
        <dbReference type="Rhea" id="RHEA:17989"/>
        <dbReference type="Rhea" id="RHEA-COMP:9863"/>
        <dbReference type="Rhea" id="RHEA-COMP:11604"/>
        <dbReference type="ChEBI" id="CHEBI:15378"/>
        <dbReference type="ChEBI" id="CHEBI:29999"/>
        <dbReference type="ChEBI" id="CHEBI:30616"/>
        <dbReference type="ChEBI" id="CHEBI:83421"/>
        <dbReference type="ChEBI" id="CHEBI:456216"/>
        <dbReference type="EC" id="2.7.11.1"/>
    </reaction>
</comment>
<comment type="catalytic activity">
    <reaction evidence="5 6">
        <text>L-threonyl-[protein] + ATP = O-phospho-L-threonyl-[protein] + ADP + H(+)</text>
        <dbReference type="Rhea" id="RHEA:46608"/>
        <dbReference type="Rhea" id="RHEA-COMP:11060"/>
        <dbReference type="Rhea" id="RHEA-COMP:11605"/>
        <dbReference type="ChEBI" id="CHEBI:15378"/>
        <dbReference type="ChEBI" id="CHEBI:30013"/>
        <dbReference type="ChEBI" id="CHEBI:30616"/>
        <dbReference type="ChEBI" id="CHEBI:61977"/>
        <dbReference type="ChEBI" id="CHEBI:456216"/>
        <dbReference type="EC" id="2.7.11.1"/>
    </reaction>
</comment>
<comment type="cofactor">
    <cofactor evidence="5 6">
        <name>Mg(2+)</name>
        <dbReference type="ChEBI" id="CHEBI:18420"/>
    </cofactor>
    <text evidence="11">Mg(2+) and Mn(2+) were both present in the kinase buffer but Mg(2+) is likely to be the in vivo cofactor.</text>
</comment>
<comment type="subunit">
    <text evidence="1 6 8">Microtubule inner protein component of sperm flagellar doublet microtubules (PubMed:37295417). Interacts with HSP90; this interaction stabilizes and activates TSSK6 (PubMed:23599433). Interacts with the heat shock proteins HSPCB, HSPA8 and HSPA1A (By similarity). These interactions appear to be required for TSSK6 kinase activity (By similarity). Interacts with TSACC; this interaction is direct and recruits TSACC to HSP90, which is essential for kinase activity (By similarity).</text>
</comment>
<comment type="subcellular location">
    <subcellularLocation>
        <location evidence="8">Cytoplasm</location>
        <location evidence="8">Cytoskeleton</location>
        <location evidence="8">Flagellum axoneme</location>
    </subcellularLocation>
    <subcellularLocation>
        <location evidence="7">Nucleus</location>
    </subcellularLocation>
    <text evidence="7 8">Component of the sperm flagellar doublet microtubules (PubMed:37295417). Also localizes in the nucleus of elongating spermatids (PubMed:28389581).</text>
</comment>
<comment type="tissue specificity">
    <text evidence="5">Expressed in the testis, localized to the heads of elongating spermatids.</text>
</comment>
<comment type="PTM">
    <text evidence="1">Autophosphorylated.</text>
</comment>
<comment type="PTM">
    <text evidence="6">Ubiquitinated; HSP90 activity negatively regulates ubiquitination and degradation.</text>
</comment>
<comment type="disruption phenotype">
    <text evidence="5 7">Male mice are sterile due to profound impairment in motility and morphology of spermatozoa.</text>
</comment>
<comment type="similarity">
    <text evidence="10">Belongs to the protein kinase superfamily. CAMK Ser/Thr protein kinase family.</text>
</comment>
<dbReference type="EC" id="2.7.11.1" evidence="5 6"/>
<dbReference type="EMBL" id="AF329484">
    <property type="protein sequence ID" value="AAK48828.1"/>
    <property type="molecule type" value="mRNA"/>
</dbReference>
<dbReference type="EMBL" id="BC049542">
    <property type="status" value="NOT_ANNOTATED_CDS"/>
    <property type="molecule type" value="mRNA"/>
</dbReference>
<dbReference type="EMBL" id="AK076653">
    <property type="protein sequence ID" value="BAC36437.2"/>
    <property type="molecule type" value="mRNA"/>
</dbReference>
<dbReference type="CCDS" id="CCDS22354.1"/>
<dbReference type="RefSeq" id="NP_114393.1">
    <property type="nucleotide sequence ID" value="NM_032004.2"/>
</dbReference>
<dbReference type="PDB" id="8IYJ">
    <property type="method" value="EM"/>
    <property type="resolution" value="3.50 A"/>
    <property type="chains" value="X6/X7/X8=1-273"/>
</dbReference>
<dbReference type="PDBsum" id="8IYJ"/>
<dbReference type="EMDB" id="EMD-35823"/>
<dbReference type="SMR" id="Q925K9"/>
<dbReference type="FunCoup" id="Q925K9">
    <property type="interactions" value="208"/>
</dbReference>
<dbReference type="STRING" id="10090.ENSMUSP00000062783"/>
<dbReference type="PhosphoSitePlus" id="Q925K9"/>
<dbReference type="SwissPalm" id="Q925K9"/>
<dbReference type="PaxDb" id="10090-ENSMUSP00000062783"/>
<dbReference type="ProteomicsDB" id="300144"/>
<dbReference type="Antibodypedia" id="28486">
    <property type="antibodies" value="167 antibodies from 25 providers"/>
</dbReference>
<dbReference type="DNASU" id="83984"/>
<dbReference type="Ensembl" id="ENSMUST00000050373.7">
    <property type="protein sequence ID" value="ENSMUSP00000062783.6"/>
    <property type="gene ID" value="ENSMUSG00000047654.7"/>
</dbReference>
<dbReference type="GeneID" id="83984"/>
<dbReference type="KEGG" id="mmu:83984"/>
<dbReference type="UCSC" id="uc009lye.1">
    <property type="organism name" value="mouse"/>
</dbReference>
<dbReference type="AGR" id="MGI:2148775"/>
<dbReference type="CTD" id="83983"/>
<dbReference type="MGI" id="MGI:2148775">
    <property type="gene designation" value="Tssk6"/>
</dbReference>
<dbReference type="VEuPathDB" id="HostDB:ENSMUSG00000047654"/>
<dbReference type="eggNOG" id="KOG0583">
    <property type="taxonomic scope" value="Eukaryota"/>
</dbReference>
<dbReference type="GeneTree" id="ENSGT00940000160464"/>
<dbReference type="HOGENOM" id="CLU_000288_63_0_1"/>
<dbReference type="InParanoid" id="Q925K9"/>
<dbReference type="OMA" id="FELIEVC"/>
<dbReference type="OrthoDB" id="541276at2759"/>
<dbReference type="PhylomeDB" id="Q925K9"/>
<dbReference type="TreeFam" id="TF105333"/>
<dbReference type="BRENDA" id="2.7.11.1">
    <property type="organism ID" value="3474"/>
</dbReference>
<dbReference type="BioGRID-ORCS" id="83984">
    <property type="hits" value="1 hit in 81 CRISPR screens"/>
</dbReference>
<dbReference type="PRO" id="PR:Q925K9"/>
<dbReference type="Proteomes" id="UP000000589">
    <property type="component" value="Chromosome 8"/>
</dbReference>
<dbReference type="RNAct" id="Q925K9">
    <property type="molecule type" value="protein"/>
</dbReference>
<dbReference type="Bgee" id="ENSMUSG00000047654">
    <property type="expression patterns" value="Expressed in seminiferous tubule of testis and 48 other cell types or tissues"/>
</dbReference>
<dbReference type="GO" id="GO:0160110">
    <property type="term" value="C:axonemal microtubule doublet inner sheath"/>
    <property type="evidence" value="ECO:0000314"/>
    <property type="project" value="UniProtKB"/>
</dbReference>
<dbReference type="GO" id="GO:0005634">
    <property type="term" value="C:nucleus"/>
    <property type="evidence" value="ECO:0007669"/>
    <property type="project" value="UniProtKB-SubCell"/>
</dbReference>
<dbReference type="GO" id="GO:0036126">
    <property type="term" value="C:sperm flagellum"/>
    <property type="evidence" value="ECO:0000314"/>
    <property type="project" value="UniProtKB"/>
</dbReference>
<dbReference type="GO" id="GO:0005524">
    <property type="term" value="F:ATP binding"/>
    <property type="evidence" value="ECO:0000250"/>
    <property type="project" value="UniProtKB"/>
</dbReference>
<dbReference type="GO" id="GO:0000287">
    <property type="term" value="F:magnesium ion binding"/>
    <property type="evidence" value="ECO:0000314"/>
    <property type="project" value="UniProtKB"/>
</dbReference>
<dbReference type="GO" id="GO:0106310">
    <property type="term" value="F:protein serine kinase activity"/>
    <property type="evidence" value="ECO:0007669"/>
    <property type="project" value="RHEA"/>
</dbReference>
<dbReference type="GO" id="GO:0004674">
    <property type="term" value="F:protein serine/threonine kinase activity"/>
    <property type="evidence" value="ECO:0000314"/>
    <property type="project" value="UniProtKB"/>
</dbReference>
<dbReference type="GO" id="GO:0044877">
    <property type="term" value="F:protein-containing complex binding"/>
    <property type="evidence" value="ECO:0000353"/>
    <property type="project" value="UniProtKB"/>
</dbReference>
<dbReference type="GO" id="GO:0030317">
    <property type="term" value="P:flagellated sperm motility"/>
    <property type="evidence" value="ECO:0000314"/>
    <property type="project" value="UniProtKB"/>
</dbReference>
<dbReference type="GO" id="GO:0018105">
    <property type="term" value="P:peptidyl-serine phosphorylation"/>
    <property type="evidence" value="ECO:0000314"/>
    <property type="project" value="UniProtKB"/>
</dbReference>
<dbReference type="GO" id="GO:0006468">
    <property type="term" value="P:protein phosphorylation"/>
    <property type="evidence" value="ECO:0000250"/>
    <property type="project" value="UniProtKB"/>
</dbReference>
<dbReference type="GO" id="GO:0035092">
    <property type="term" value="P:sperm DNA condensation"/>
    <property type="evidence" value="ECO:0000315"/>
    <property type="project" value="UniProtKB"/>
</dbReference>
<dbReference type="CDD" id="cd14164">
    <property type="entry name" value="STKc_TSSK6-like"/>
    <property type="match status" value="1"/>
</dbReference>
<dbReference type="FunFam" id="1.10.510.10:FF:000442">
    <property type="entry name" value="Testis-specific serine/threonine-protein kinase 6"/>
    <property type="match status" value="1"/>
</dbReference>
<dbReference type="Gene3D" id="1.10.510.10">
    <property type="entry name" value="Transferase(Phosphotransferase) domain 1"/>
    <property type="match status" value="1"/>
</dbReference>
<dbReference type="InterPro" id="IPR011009">
    <property type="entry name" value="Kinase-like_dom_sf"/>
</dbReference>
<dbReference type="InterPro" id="IPR000719">
    <property type="entry name" value="Prot_kinase_dom"/>
</dbReference>
<dbReference type="InterPro" id="IPR017441">
    <property type="entry name" value="Protein_kinase_ATP_BS"/>
</dbReference>
<dbReference type="InterPro" id="IPR008271">
    <property type="entry name" value="Ser/Thr_kinase_AS"/>
</dbReference>
<dbReference type="InterPro" id="IPR042710">
    <property type="entry name" value="TSSK6_STKc"/>
</dbReference>
<dbReference type="PANTHER" id="PTHR24346">
    <property type="entry name" value="MAP/MICROTUBULE AFFINITY-REGULATING KINASE"/>
    <property type="match status" value="1"/>
</dbReference>
<dbReference type="PANTHER" id="PTHR24346:SF102">
    <property type="entry name" value="TESTIS-SPECIFIC SERINE_THREONINE-PROTEIN KINASE 1"/>
    <property type="match status" value="1"/>
</dbReference>
<dbReference type="Pfam" id="PF00069">
    <property type="entry name" value="Pkinase"/>
    <property type="match status" value="1"/>
</dbReference>
<dbReference type="PIRSF" id="PIRSF000654">
    <property type="entry name" value="Integrin-linked_kinase"/>
    <property type="match status" value="1"/>
</dbReference>
<dbReference type="SMART" id="SM00220">
    <property type="entry name" value="S_TKc"/>
    <property type="match status" value="1"/>
</dbReference>
<dbReference type="SUPFAM" id="SSF56112">
    <property type="entry name" value="Protein kinase-like (PK-like)"/>
    <property type="match status" value="1"/>
</dbReference>
<dbReference type="PROSITE" id="PS00107">
    <property type="entry name" value="PROTEIN_KINASE_ATP"/>
    <property type="match status" value="1"/>
</dbReference>
<dbReference type="PROSITE" id="PS50011">
    <property type="entry name" value="PROTEIN_KINASE_DOM"/>
    <property type="match status" value="1"/>
</dbReference>
<dbReference type="PROSITE" id="PS00108">
    <property type="entry name" value="PROTEIN_KINASE_ST"/>
    <property type="match status" value="1"/>
</dbReference>
<organism>
    <name type="scientific">Mus musculus</name>
    <name type="common">Mouse</name>
    <dbReference type="NCBI Taxonomy" id="10090"/>
    <lineage>
        <taxon>Eukaryota</taxon>
        <taxon>Metazoa</taxon>
        <taxon>Chordata</taxon>
        <taxon>Craniata</taxon>
        <taxon>Vertebrata</taxon>
        <taxon>Euteleostomi</taxon>
        <taxon>Mammalia</taxon>
        <taxon>Eutheria</taxon>
        <taxon>Euarchontoglires</taxon>
        <taxon>Glires</taxon>
        <taxon>Rodentia</taxon>
        <taxon>Myomorpha</taxon>
        <taxon>Muroidea</taxon>
        <taxon>Muridae</taxon>
        <taxon>Murinae</taxon>
        <taxon>Mus</taxon>
        <taxon>Mus</taxon>
    </lineage>
</organism>
<evidence type="ECO:0000250" key="1">
    <source>
        <dbReference type="UniProtKB" id="Q9BXA6"/>
    </source>
</evidence>
<evidence type="ECO:0000250" key="2">
    <source>
        <dbReference type="UniProtKB" id="Q9D2E1"/>
    </source>
</evidence>
<evidence type="ECO:0000255" key="3">
    <source>
        <dbReference type="PROSITE-ProRule" id="PRU00159"/>
    </source>
</evidence>
<evidence type="ECO:0000255" key="4">
    <source>
        <dbReference type="PROSITE-ProRule" id="PRU10027"/>
    </source>
</evidence>
<evidence type="ECO:0000269" key="5">
    <source>
    </source>
</evidence>
<evidence type="ECO:0000269" key="6">
    <source>
    </source>
</evidence>
<evidence type="ECO:0000269" key="7">
    <source>
    </source>
</evidence>
<evidence type="ECO:0000269" key="8">
    <source>
    </source>
</evidence>
<evidence type="ECO:0000303" key="9">
    <source>
    </source>
</evidence>
<evidence type="ECO:0000305" key="10"/>
<evidence type="ECO:0000305" key="11">
    <source>
    </source>
</evidence>
<evidence type="ECO:0000312" key="12">
    <source>
        <dbReference type="EMBL" id="AAK48828.1"/>
    </source>
</evidence>
<evidence type="ECO:0000312" key="13">
    <source>
        <dbReference type="EMBL" id="BAC36437.2"/>
    </source>
</evidence>
<evidence type="ECO:0000312" key="14">
    <source>
        <dbReference type="MGI" id="MGI:2148775"/>
    </source>
</evidence>
<evidence type="ECO:0007744" key="15">
    <source>
        <dbReference type="PDB" id="8IYJ"/>
    </source>
</evidence>
<sequence>MSGDKLLSELGYKLGRTIGEGSYSKVKVATSKKYKGTVAIKVVDRRRAPPDFVNKFLPRELSILRGVRHPHIVHVFEFIEVCNGKLYIVMEAAATDLLQAVQRNGRIPGSQARELFSQIAGAVRYLHDHHLVHRDLKCENVLLSPDERRVKITDFGFGRQAHGYPDLSTTYCGSAAYASPEVLLGIPYDPKKYDVWSLGVVLYVMVTGCMPFDDSDIAGLPRRQKRGVLYPDGLELSERCKSLIAELLQFSPSARPSAGQVARNGWLRAGDSG</sequence>
<proteinExistence type="evidence at protein level"/>
<keyword id="KW-0002">3D-structure</keyword>
<keyword id="KW-0067">ATP-binding</keyword>
<keyword id="KW-0966">Cell projection</keyword>
<keyword id="KW-0969">Cilium</keyword>
<keyword id="KW-0963">Cytoplasm</keyword>
<keyword id="KW-0206">Cytoskeleton</keyword>
<keyword id="KW-0217">Developmental protein</keyword>
<keyword id="KW-0221">Differentiation</keyword>
<keyword id="KW-0282">Flagellum</keyword>
<keyword id="KW-0418">Kinase</keyword>
<keyword id="KW-0460">Magnesium</keyword>
<keyword id="KW-0479">Metal-binding</keyword>
<keyword id="KW-0547">Nucleotide-binding</keyword>
<keyword id="KW-0539">Nucleus</keyword>
<keyword id="KW-0597">Phosphoprotein</keyword>
<keyword id="KW-1185">Reference proteome</keyword>
<keyword id="KW-0723">Serine/threonine-protein kinase</keyword>
<keyword id="KW-0744">Spermatogenesis</keyword>
<keyword id="KW-0808">Transferase</keyword>
<keyword id="KW-0832">Ubl conjugation</keyword>
<protein>
    <recommendedName>
        <fullName>Testis-specific serine/threonine-protein kinase 6</fullName>
        <shortName>TSK-6</shortName>
        <shortName>TSSK-6</shortName>
        <shortName>Testis-specific kinase 6</shortName>
        <ecNumber evidence="5 6">2.7.11.1</ecNumber>
    </recommendedName>
    <alternativeName>
        <fullName>Serine/threonine-protein kinase SSTK</fullName>
    </alternativeName>
    <alternativeName>
        <fullName>Small serine/threonine kinase</fullName>
    </alternativeName>
</protein>
<reference evidence="10 12" key="1">
    <citation type="journal article" date="2005" name="Mol. Cell. Biol.">
        <title>Identification and characterization of SSTK, a serine/threonine protein kinase essential for male fertility.</title>
        <authorList>
            <person name="Spiridonov N.A."/>
            <person name="Wong L."/>
            <person name="Zerfas P.M."/>
            <person name="Starost M.F."/>
            <person name="Pack S.D."/>
            <person name="Paweletz C.P."/>
            <person name="Johnson G.R."/>
        </authorList>
    </citation>
    <scope>NUCLEOTIDE SEQUENCE [MRNA]</scope>
    <scope>FUNCTION</scope>
    <scope>CATALYTIC ACTIVITY</scope>
    <scope>COFACTOR</scope>
    <scope>TISSUE SPECIFICITY</scope>
    <scope>DISRUPTION PHENOTYPE</scope>
    <source>
        <strain evidence="12">C57BL/6J</strain>
    </source>
</reference>
<reference key="2">
    <citation type="journal article" date="2004" name="Genome Res.">
        <title>The status, quality, and expansion of the NIH full-length cDNA project: the Mammalian Gene Collection (MGC).</title>
        <authorList>
            <consortium name="The MGC Project Team"/>
        </authorList>
    </citation>
    <scope>NUCLEOTIDE SEQUENCE [LARGE SCALE MRNA]</scope>
    <source>
        <tissue>Testis</tissue>
    </source>
</reference>
<reference evidence="13" key="3">
    <citation type="journal article" date="2005" name="Science">
        <title>The transcriptional landscape of the mammalian genome.</title>
        <authorList>
            <person name="Carninci P."/>
            <person name="Kasukawa T."/>
            <person name="Katayama S."/>
            <person name="Gough J."/>
            <person name="Frith M.C."/>
            <person name="Maeda N."/>
            <person name="Oyama R."/>
            <person name="Ravasi T."/>
            <person name="Lenhard B."/>
            <person name="Wells C."/>
            <person name="Kodzius R."/>
            <person name="Shimokawa K."/>
            <person name="Bajic V.B."/>
            <person name="Brenner S.E."/>
            <person name="Batalov S."/>
            <person name="Forrest A.R."/>
            <person name="Zavolan M."/>
            <person name="Davis M.J."/>
            <person name="Wilming L.G."/>
            <person name="Aidinis V."/>
            <person name="Allen J.E."/>
            <person name="Ambesi-Impiombato A."/>
            <person name="Apweiler R."/>
            <person name="Aturaliya R.N."/>
            <person name="Bailey T.L."/>
            <person name="Bansal M."/>
            <person name="Baxter L."/>
            <person name="Beisel K.W."/>
            <person name="Bersano T."/>
            <person name="Bono H."/>
            <person name="Chalk A.M."/>
            <person name="Chiu K.P."/>
            <person name="Choudhary V."/>
            <person name="Christoffels A."/>
            <person name="Clutterbuck D.R."/>
            <person name="Crowe M.L."/>
            <person name="Dalla E."/>
            <person name="Dalrymple B.P."/>
            <person name="de Bono B."/>
            <person name="Della Gatta G."/>
            <person name="di Bernardo D."/>
            <person name="Down T."/>
            <person name="Engstrom P."/>
            <person name="Fagiolini M."/>
            <person name="Faulkner G."/>
            <person name="Fletcher C.F."/>
            <person name="Fukushima T."/>
            <person name="Furuno M."/>
            <person name="Futaki S."/>
            <person name="Gariboldi M."/>
            <person name="Georgii-Hemming P."/>
            <person name="Gingeras T.R."/>
            <person name="Gojobori T."/>
            <person name="Green R.E."/>
            <person name="Gustincich S."/>
            <person name="Harbers M."/>
            <person name="Hayashi Y."/>
            <person name="Hensch T.K."/>
            <person name="Hirokawa N."/>
            <person name="Hill D."/>
            <person name="Huminiecki L."/>
            <person name="Iacono M."/>
            <person name="Ikeo K."/>
            <person name="Iwama A."/>
            <person name="Ishikawa T."/>
            <person name="Jakt M."/>
            <person name="Kanapin A."/>
            <person name="Katoh M."/>
            <person name="Kawasawa Y."/>
            <person name="Kelso J."/>
            <person name="Kitamura H."/>
            <person name="Kitano H."/>
            <person name="Kollias G."/>
            <person name="Krishnan S.P."/>
            <person name="Kruger A."/>
            <person name="Kummerfeld S.K."/>
            <person name="Kurochkin I.V."/>
            <person name="Lareau L.F."/>
            <person name="Lazarevic D."/>
            <person name="Lipovich L."/>
            <person name="Liu J."/>
            <person name="Liuni S."/>
            <person name="McWilliam S."/>
            <person name="Madan Babu M."/>
            <person name="Madera M."/>
            <person name="Marchionni L."/>
            <person name="Matsuda H."/>
            <person name="Matsuzawa S."/>
            <person name="Miki H."/>
            <person name="Mignone F."/>
            <person name="Miyake S."/>
            <person name="Morris K."/>
            <person name="Mottagui-Tabar S."/>
            <person name="Mulder N."/>
            <person name="Nakano N."/>
            <person name="Nakauchi H."/>
            <person name="Ng P."/>
            <person name="Nilsson R."/>
            <person name="Nishiguchi S."/>
            <person name="Nishikawa S."/>
            <person name="Nori F."/>
            <person name="Ohara O."/>
            <person name="Okazaki Y."/>
            <person name="Orlando V."/>
            <person name="Pang K.C."/>
            <person name="Pavan W.J."/>
            <person name="Pavesi G."/>
            <person name="Pesole G."/>
            <person name="Petrovsky N."/>
            <person name="Piazza S."/>
            <person name="Reed J."/>
            <person name="Reid J.F."/>
            <person name="Ring B.Z."/>
            <person name="Ringwald M."/>
            <person name="Rost B."/>
            <person name="Ruan Y."/>
            <person name="Salzberg S.L."/>
            <person name="Sandelin A."/>
            <person name="Schneider C."/>
            <person name="Schoenbach C."/>
            <person name="Sekiguchi K."/>
            <person name="Semple C.A."/>
            <person name="Seno S."/>
            <person name="Sessa L."/>
            <person name="Sheng Y."/>
            <person name="Shibata Y."/>
            <person name="Shimada H."/>
            <person name="Shimada K."/>
            <person name="Silva D."/>
            <person name="Sinclair B."/>
            <person name="Sperling S."/>
            <person name="Stupka E."/>
            <person name="Sugiura K."/>
            <person name="Sultana R."/>
            <person name="Takenaka Y."/>
            <person name="Taki K."/>
            <person name="Tammoja K."/>
            <person name="Tan S.L."/>
            <person name="Tang S."/>
            <person name="Taylor M.S."/>
            <person name="Tegner J."/>
            <person name="Teichmann S.A."/>
            <person name="Ueda H.R."/>
            <person name="van Nimwegen E."/>
            <person name="Verardo R."/>
            <person name="Wei C.L."/>
            <person name="Yagi K."/>
            <person name="Yamanishi H."/>
            <person name="Zabarovsky E."/>
            <person name="Zhu S."/>
            <person name="Zimmer A."/>
            <person name="Hide W."/>
            <person name="Bult C."/>
            <person name="Grimmond S.M."/>
            <person name="Teasdale R.D."/>
            <person name="Liu E.T."/>
            <person name="Brusic V."/>
            <person name="Quackenbush J."/>
            <person name="Wahlestedt C."/>
            <person name="Mattick J.S."/>
            <person name="Hume D.A."/>
            <person name="Kai C."/>
            <person name="Sasaki D."/>
            <person name="Tomaru Y."/>
            <person name="Fukuda S."/>
            <person name="Kanamori-Katayama M."/>
            <person name="Suzuki M."/>
            <person name="Aoki J."/>
            <person name="Arakawa T."/>
            <person name="Iida J."/>
            <person name="Imamura K."/>
            <person name="Itoh M."/>
            <person name="Kato T."/>
            <person name="Kawaji H."/>
            <person name="Kawagashira N."/>
            <person name="Kawashima T."/>
            <person name="Kojima M."/>
            <person name="Kondo S."/>
            <person name="Konno H."/>
            <person name="Nakano K."/>
            <person name="Ninomiya N."/>
            <person name="Nishio T."/>
            <person name="Okada M."/>
            <person name="Plessy C."/>
            <person name="Shibata K."/>
            <person name="Shiraki T."/>
            <person name="Suzuki S."/>
            <person name="Tagami M."/>
            <person name="Waki K."/>
            <person name="Watahiki A."/>
            <person name="Okamura-Oho Y."/>
            <person name="Suzuki H."/>
            <person name="Kawai J."/>
            <person name="Hayashizaki Y."/>
        </authorList>
    </citation>
    <scope>NUCLEOTIDE SEQUENCE [LARGE SCALE MRNA] OF 61-273</scope>
    <source>
        <strain evidence="13">C57BL/6J</strain>
        <tissue evidence="13">Testis</tissue>
    </source>
</reference>
<reference evidence="10" key="4">
    <citation type="journal article" date="2013" name="J. Biol. Chem.">
        <title>Heat shock protein 90 functions to stabilize and activate the testis-specific serine/threonine kinases, a family of kinases essential for male fertility.</title>
        <authorList>
            <person name="Jha K.N."/>
            <person name="Coleman A.R."/>
            <person name="Wong L."/>
            <person name="Salicioni A.M."/>
            <person name="Howcroft E."/>
            <person name="Johnson G.R."/>
        </authorList>
    </citation>
    <scope>CATALYTIC ACTIVITY</scope>
    <scope>COFACTOR</scope>
    <scope>INTERACTION WITH HSP90</scope>
    <scope>UBIQUITINATION</scope>
</reference>
<reference key="5">
    <citation type="journal article" date="2017" name="J. Cell Sci.">
        <title>TSSK6 is required for gammaH2AX formation and the histone-to-protamine transition during spermiogenesis.</title>
        <authorList>
            <person name="Jha K.N."/>
            <person name="Tripurani S.K."/>
            <person name="Johnson G.R."/>
        </authorList>
    </citation>
    <scope>FUNCTION</scope>
    <scope>SUBCELLULAR LOCATION</scope>
    <scope>DISRUPTION PHENOTYPE</scope>
</reference>
<reference evidence="15" key="6">
    <citation type="journal article" date="2023" name="Cell">
        <title>Structures of sperm flagellar doublet microtubules expand the genetic spectrum of male infertility.</title>
        <authorList>
            <person name="Zhou L."/>
            <person name="Liu H."/>
            <person name="Liu S."/>
            <person name="Yang X."/>
            <person name="Dong Y."/>
            <person name="Pan Y."/>
            <person name="Xiao Z."/>
            <person name="Zheng B."/>
            <person name="Sun Y."/>
            <person name="Huang P."/>
            <person name="Zhang X."/>
            <person name="Hu J."/>
            <person name="Sun R."/>
            <person name="Feng S."/>
            <person name="Zhu Y."/>
            <person name="Liu M."/>
            <person name="Gui M."/>
            <person name="Wu J."/>
        </authorList>
    </citation>
    <scope>STRUCTURE BY ELECTRON MICROSCOPY (3.50 ANGSTROMS) OF SPERM FLAGELLAR DOUBLET MICROTUBULES</scope>
    <scope>SUBCELLULAR LOCATION</scope>
    <scope>SUBUNIT</scope>
</reference>
<name>TSSK6_MOUSE</name>
<accession>Q925K9</accession>
<accession>Q5RL09</accession>
<accession>Q8C625</accession>
<feature type="chain" id="PRO_0000227747" description="Testis-specific serine/threonine-protein kinase 6">
    <location>
        <begin position="1"/>
        <end position="273"/>
    </location>
</feature>
<feature type="domain" description="Protein kinase" evidence="3">
    <location>
        <begin position="12"/>
        <end position="267"/>
    </location>
</feature>
<feature type="active site" description="Proton acceptor" evidence="1 3 4">
    <location>
        <position position="135"/>
    </location>
</feature>
<feature type="binding site" evidence="2 3">
    <location>
        <begin position="18"/>
        <end position="26"/>
    </location>
    <ligand>
        <name>ATP</name>
        <dbReference type="ChEBI" id="CHEBI:30616"/>
    </ligand>
</feature>
<feature type="binding site" evidence="1 3">
    <location>
        <position position="41"/>
    </location>
    <ligand>
        <name>ATP</name>
        <dbReference type="ChEBI" id="CHEBI:30616"/>
    </ligand>
</feature>
<feature type="sequence conflict" description="In Ref. 3; BAC36437." evidence="10" ref="3">
    <original>L</original>
    <variation>M</variation>
    <location>
        <position position="61"/>
    </location>
</feature>